<organism>
    <name type="scientific">Coxiella burnetii (strain RSA 493 / Nine Mile phase I)</name>
    <dbReference type="NCBI Taxonomy" id="227377"/>
    <lineage>
        <taxon>Bacteria</taxon>
        <taxon>Pseudomonadati</taxon>
        <taxon>Pseudomonadota</taxon>
        <taxon>Gammaproteobacteria</taxon>
        <taxon>Legionellales</taxon>
        <taxon>Coxiellaceae</taxon>
        <taxon>Coxiella</taxon>
    </lineage>
</organism>
<keyword id="KW-0067">ATP-binding</keyword>
<keyword id="KW-0315">Glutamine amidotransferase</keyword>
<keyword id="KW-0436">Ligase</keyword>
<keyword id="KW-0460">Magnesium</keyword>
<keyword id="KW-0479">Metal-binding</keyword>
<keyword id="KW-0547">Nucleotide-binding</keyword>
<keyword id="KW-0665">Pyrimidine biosynthesis</keyword>
<keyword id="KW-1185">Reference proteome</keyword>
<sequence length="555" mass="61224">MTRYIFITGGVVSSLGKGITSASLGAILEAQGLTVTLLKLDPYINVDPGTMSPFQHGEVFVTEDGAETDLDLGHYERFVNATMTRKNNFTTGRVYADVIRKERRGDYLGGTIQVIPHITDEIKAKIREGADGADVALVEVGGTVGDIESLPFLEAIRQMRIELGDQQTLFIHLTLVPYVAVAGEIKTKPTQHSVKELRSIGIQPDILVCRSEQPLPDAERAKIALFTNVPEPSVISLSDVKSIYEIPLILRDQGLGNRVCEKLNIKATAADLDDWKKVVQAQKNPRHTVTVAVVGKYVDLEDSYKSLSEALIHAGIHTQTRVVIEYIDSEAIELHGTELLKKVDAILVPGGFGSRGIEGKILAAQYARENGIPYFGICLGMQIAIIEFARDKAQMENANSTEFDPKTPFPVVALVSEWMAKEGIIEKRKWGDDLGGTMRLGGQPCRLKIDSLARRLYGEDRVIERHRHRYEVNNDLIGELEKKGLVISGRSIDDRLVEMIELADHPWFVGCQFHPEFTSTPRKGHPLFIGFIKAGLAAKEAKKAVLAAPSQEKTD</sequence>
<feature type="chain" id="PRO_0000266101" description="CTP synthase">
    <location>
        <begin position="1"/>
        <end position="555"/>
    </location>
</feature>
<feature type="domain" description="Glutamine amidotransferase type-1" evidence="1">
    <location>
        <begin position="290"/>
        <end position="541"/>
    </location>
</feature>
<feature type="region of interest" description="Amidoligase domain" evidence="1">
    <location>
        <begin position="1"/>
        <end position="265"/>
    </location>
</feature>
<feature type="active site" description="Nucleophile; for glutamine hydrolysis" evidence="1">
    <location>
        <position position="378"/>
    </location>
</feature>
<feature type="active site" evidence="1">
    <location>
        <position position="514"/>
    </location>
</feature>
<feature type="active site" evidence="1">
    <location>
        <position position="516"/>
    </location>
</feature>
<feature type="binding site" evidence="1">
    <location>
        <position position="13"/>
    </location>
    <ligand>
        <name>CTP</name>
        <dbReference type="ChEBI" id="CHEBI:37563"/>
        <note>allosteric inhibitor</note>
    </ligand>
</feature>
<feature type="binding site" evidence="1">
    <location>
        <position position="13"/>
    </location>
    <ligand>
        <name>UTP</name>
        <dbReference type="ChEBI" id="CHEBI:46398"/>
    </ligand>
</feature>
<feature type="binding site" evidence="1">
    <location>
        <begin position="14"/>
        <end position="19"/>
    </location>
    <ligand>
        <name>ATP</name>
        <dbReference type="ChEBI" id="CHEBI:30616"/>
    </ligand>
</feature>
<feature type="binding site" evidence="1">
    <location>
        <position position="71"/>
    </location>
    <ligand>
        <name>ATP</name>
        <dbReference type="ChEBI" id="CHEBI:30616"/>
    </ligand>
</feature>
<feature type="binding site" evidence="1">
    <location>
        <position position="71"/>
    </location>
    <ligand>
        <name>Mg(2+)</name>
        <dbReference type="ChEBI" id="CHEBI:18420"/>
    </ligand>
</feature>
<feature type="binding site" evidence="1">
    <location>
        <position position="139"/>
    </location>
    <ligand>
        <name>Mg(2+)</name>
        <dbReference type="ChEBI" id="CHEBI:18420"/>
    </ligand>
</feature>
<feature type="binding site" evidence="1">
    <location>
        <begin position="146"/>
        <end position="148"/>
    </location>
    <ligand>
        <name>CTP</name>
        <dbReference type="ChEBI" id="CHEBI:37563"/>
        <note>allosteric inhibitor</note>
    </ligand>
</feature>
<feature type="binding site" evidence="1">
    <location>
        <begin position="186"/>
        <end position="191"/>
    </location>
    <ligand>
        <name>CTP</name>
        <dbReference type="ChEBI" id="CHEBI:37563"/>
        <note>allosteric inhibitor</note>
    </ligand>
</feature>
<feature type="binding site" evidence="1">
    <location>
        <begin position="186"/>
        <end position="191"/>
    </location>
    <ligand>
        <name>UTP</name>
        <dbReference type="ChEBI" id="CHEBI:46398"/>
    </ligand>
</feature>
<feature type="binding site" evidence="1">
    <location>
        <position position="222"/>
    </location>
    <ligand>
        <name>CTP</name>
        <dbReference type="ChEBI" id="CHEBI:37563"/>
        <note>allosteric inhibitor</note>
    </ligand>
</feature>
<feature type="binding site" evidence="1">
    <location>
        <position position="222"/>
    </location>
    <ligand>
        <name>UTP</name>
        <dbReference type="ChEBI" id="CHEBI:46398"/>
    </ligand>
</feature>
<feature type="binding site" evidence="1">
    <location>
        <position position="351"/>
    </location>
    <ligand>
        <name>L-glutamine</name>
        <dbReference type="ChEBI" id="CHEBI:58359"/>
    </ligand>
</feature>
<feature type="binding site" evidence="1">
    <location>
        <begin position="379"/>
        <end position="382"/>
    </location>
    <ligand>
        <name>L-glutamine</name>
        <dbReference type="ChEBI" id="CHEBI:58359"/>
    </ligand>
</feature>
<feature type="binding site" evidence="1">
    <location>
        <position position="402"/>
    </location>
    <ligand>
        <name>L-glutamine</name>
        <dbReference type="ChEBI" id="CHEBI:58359"/>
    </ligand>
</feature>
<feature type="binding site" evidence="1">
    <location>
        <position position="469"/>
    </location>
    <ligand>
        <name>L-glutamine</name>
        <dbReference type="ChEBI" id="CHEBI:58359"/>
    </ligand>
</feature>
<reference key="1">
    <citation type="journal article" date="2003" name="Proc. Natl. Acad. Sci. U.S.A.">
        <title>Complete genome sequence of the Q-fever pathogen, Coxiella burnetii.</title>
        <authorList>
            <person name="Seshadri R."/>
            <person name="Paulsen I.T."/>
            <person name="Eisen J.A."/>
            <person name="Read T.D."/>
            <person name="Nelson K.E."/>
            <person name="Nelson W.C."/>
            <person name="Ward N.L."/>
            <person name="Tettelin H."/>
            <person name="Davidsen T.M."/>
            <person name="Beanan M.J."/>
            <person name="DeBoy R.T."/>
            <person name="Daugherty S.C."/>
            <person name="Brinkac L.M."/>
            <person name="Madupu R."/>
            <person name="Dodson R.J."/>
            <person name="Khouri H.M."/>
            <person name="Lee K.H."/>
            <person name="Carty H.A."/>
            <person name="Scanlan D."/>
            <person name="Heinzen R.A."/>
            <person name="Thompson H.A."/>
            <person name="Samuel J.E."/>
            <person name="Fraser C.M."/>
            <person name="Heidelberg J.F."/>
        </authorList>
    </citation>
    <scope>NUCLEOTIDE SEQUENCE [LARGE SCALE GENOMIC DNA]</scope>
    <source>
        <strain>RSA 493 / Nine Mile phase I</strain>
    </source>
</reference>
<comment type="function">
    <text evidence="1">Catalyzes the ATP-dependent amination of UTP to CTP with either L-glutamine or ammonia as the source of nitrogen. Regulates intracellular CTP levels through interactions with the four ribonucleotide triphosphates.</text>
</comment>
<comment type="catalytic activity">
    <reaction evidence="1">
        <text>UTP + L-glutamine + ATP + H2O = CTP + L-glutamate + ADP + phosphate + 2 H(+)</text>
        <dbReference type="Rhea" id="RHEA:26426"/>
        <dbReference type="ChEBI" id="CHEBI:15377"/>
        <dbReference type="ChEBI" id="CHEBI:15378"/>
        <dbReference type="ChEBI" id="CHEBI:29985"/>
        <dbReference type="ChEBI" id="CHEBI:30616"/>
        <dbReference type="ChEBI" id="CHEBI:37563"/>
        <dbReference type="ChEBI" id="CHEBI:43474"/>
        <dbReference type="ChEBI" id="CHEBI:46398"/>
        <dbReference type="ChEBI" id="CHEBI:58359"/>
        <dbReference type="ChEBI" id="CHEBI:456216"/>
        <dbReference type="EC" id="6.3.4.2"/>
    </reaction>
</comment>
<comment type="catalytic activity">
    <reaction evidence="1">
        <text>L-glutamine + H2O = L-glutamate + NH4(+)</text>
        <dbReference type="Rhea" id="RHEA:15889"/>
        <dbReference type="ChEBI" id="CHEBI:15377"/>
        <dbReference type="ChEBI" id="CHEBI:28938"/>
        <dbReference type="ChEBI" id="CHEBI:29985"/>
        <dbReference type="ChEBI" id="CHEBI:58359"/>
    </reaction>
</comment>
<comment type="catalytic activity">
    <reaction evidence="1">
        <text>UTP + NH4(+) + ATP = CTP + ADP + phosphate + 2 H(+)</text>
        <dbReference type="Rhea" id="RHEA:16597"/>
        <dbReference type="ChEBI" id="CHEBI:15378"/>
        <dbReference type="ChEBI" id="CHEBI:28938"/>
        <dbReference type="ChEBI" id="CHEBI:30616"/>
        <dbReference type="ChEBI" id="CHEBI:37563"/>
        <dbReference type="ChEBI" id="CHEBI:43474"/>
        <dbReference type="ChEBI" id="CHEBI:46398"/>
        <dbReference type="ChEBI" id="CHEBI:456216"/>
    </reaction>
</comment>
<comment type="activity regulation">
    <text evidence="1">Allosterically activated by GTP, when glutamine is the substrate; GTP has no effect on the reaction when ammonia is the substrate. The allosteric effector GTP functions by stabilizing the protein conformation that binds the tetrahedral intermediate(s) formed during glutamine hydrolysis. Inhibited by the product CTP, via allosteric rather than competitive inhibition.</text>
</comment>
<comment type="pathway">
    <text evidence="1">Pyrimidine metabolism; CTP biosynthesis via de novo pathway; CTP from UDP: step 2/2.</text>
</comment>
<comment type="subunit">
    <text evidence="1">Homotetramer.</text>
</comment>
<comment type="miscellaneous">
    <text evidence="1">CTPSs have evolved a hybrid strategy for distinguishing between UTP and CTP. The overlapping regions of the product feedback inhibitory and substrate sites recognize a common feature in both compounds, the triphosphate moiety. To differentiate isosteric substrate and product pyrimidine rings, an additional pocket far from the expected kinase/ligase catalytic site, specifically recognizes the cytosine and ribose portions of the product inhibitor.</text>
</comment>
<comment type="similarity">
    <text evidence="1">Belongs to the CTP synthase family.</text>
</comment>
<dbReference type="EC" id="6.3.4.2" evidence="1"/>
<dbReference type="EMBL" id="AE016828">
    <property type="protein sequence ID" value="AAO91178.1"/>
    <property type="molecule type" value="Genomic_DNA"/>
</dbReference>
<dbReference type="RefSeq" id="NP_820664.1">
    <property type="nucleotide sequence ID" value="NC_002971.4"/>
</dbReference>
<dbReference type="RefSeq" id="WP_010958369.1">
    <property type="nucleotide sequence ID" value="NC_002971.4"/>
</dbReference>
<dbReference type="SMR" id="Q83B36"/>
<dbReference type="STRING" id="227377.CBU_1682"/>
<dbReference type="EnsemblBacteria" id="AAO91178">
    <property type="protein sequence ID" value="AAO91178"/>
    <property type="gene ID" value="CBU_1682"/>
</dbReference>
<dbReference type="GeneID" id="1209593"/>
<dbReference type="KEGG" id="cbu:CBU_1682"/>
<dbReference type="PATRIC" id="fig|227377.7.peg.1671"/>
<dbReference type="eggNOG" id="COG0504">
    <property type="taxonomic scope" value="Bacteria"/>
</dbReference>
<dbReference type="HOGENOM" id="CLU_011675_5_0_6"/>
<dbReference type="OrthoDB" id="9801107at2"/>
<dbReference type="UniPathway" id="UPA00159">
    <property type="reaction ID" value="UER00277"/>
</dbReference>
<dbReference type="Proteomes" id="UP000002671">
    <property type="component" value="Chromosome"/>
</dbReference>
<dbReference type="GO" id="GO:0005829">
    <property type="term" value="C:cytosol"/>
    <property type="evidence" value="ECO:0000318"/>
    <property type="project" value="GO_Central"/>
</dbReference>
<dbReference type="GO" id="GO:0005524">
    <property type="term" value="F:ATP binding"/>
    <property type="evidence" value="ECO:0007669"/>
    <property type="project" value="UniProtKB-KW"/>
</dbReference>
<dbReference type="GO" id="GO:0003883">
    <property type="term" value="F:CTP synthase activity"/>
    <property type="evidence" value="ECO:0000318"/>
    <property type="project" value="GO_Central"/>
</dbReference>
<dbReference type="GO" id="GO:0004359">
    <property type="term" value="F:glutaminase activity"/>
    <property type="evidence" value="ECO:0007669"/>
    <property type="project" value="RHEA"/>
</dbReference>
<dbReference type="GO" id="GO:0042802">
    <property type="term" value="F:identical protein binding"/>
    <property type="evidence" value="ECO:0000318"/>
    <property type="project" value="GO_Central"/>
</dbReference>
<dbReference type="GO" id="GO:0046872">
    <property type="term" value="F:metal ion binding"/>
    <property type="evidence" value="ECO:0007669"/>
    <property type="project" value="UniProtKB-KW"/>
</dbReference>
<dbReference type="GO" id="GO:0044210">
    <property type="term" value="P:'de novo' CTP biosynthetic process"/>
    <property type="evidence" value="ECO:0007669"/>
    <property type="project" value="UniProtKB-UniRule"/>
</dbReference>
<dbReference type="GO" id="GO:0006241">
    <property type="term" value="P:CTP biosynthetic process"/>
    <property type="evidence" value="ECO:0000318"/>
    <property type="project" value="GO_Central"/>
</dbReference>
<dbReference type="GO" id="GO:0019856">
    <property type="term" value="P:pyrimidine nucleobase biosynthetic process"/>
    <property type="evidence" value="ECO:0000318"/>
    <property type="project" value="GO_Central"/>
</dbReference>
<dbReference type="CDD" id="cd03113">
    <property type="entry name" value="CTPS_N"/>
    <property type="match status" value="1"/>
</dbReference>
<dbReference type="CDD" id="cd01746">
    <property type="entry name" value="GATase1_CTP_Synthase"/>
    <property type="match status" value="1"/>
</dbReference>
<dbReference type="FunFam" id="3.40.50.300:FF:000009">
    <property type="entry name" value="CTP synthase"/>
    <property type="match status" value="1"/>
</dbReference>
<dbReference type="FunFam" id="3.40.50.880:FF:000002">
    <property type="entry name" value="CTP synthase"/>
    <property type="match status" value="1"/>
</dbReference>
<dbReference type="Gene3D" id="3.40.50.880">
    <property type="match status" value="1"/>
</dbReference>
<dbReference type="Gene3D" id="3.40.50.300">
    <property type="entry name" value="P-loop containing nucleotide triphosphate hydrolases"/>
    <property type="match status" value="1"/>
</dbReference>
<dbReference type="HAMAP" id="MF_01227">
    <property type="entry name" value="PyrG"/>
    <property type="match status" value="1"/>
</dbReference>
<dbReference type="InterPro" id="IPR029062">
    <property type="entry name" value="Class_I_gatase-like"/>
</dbReference>
<dbReference type="InterPro" id="IPR004468">
    <property type="entry name" value="CTP_synthase"/>
</dbReference>
<dbReference type="InterPro" id="IPR017456">
    <property type="entry name" value="CTP_synthase_N"/>
</dbReference>
<dbReference type="InterPro" id="IPR017926">
    <property type="entry name" value="GATASE"/>
</dbReference>
<dbReference type="InterPro" id="IPR033828">
    <property type="entry name" value="GATase1_CTP_Synthase"/>
</dbReference>
<dbReference type="InterPro" id="IPR027417">
    <property type="entry name" value="P-loop_NTPase"/>
</dbReference>
<dbReference type="NCBIfam" id="NF003792">
    <property type="entry name" value="PRK05380.1"/>
    <property type="match status" value="1"/>
</dbReference>
<dbReference type="NCBIfam" id="TIGR00337">
    <property type="entry name" value="PyrG"/>
    <property type="match status" value="1"/>
</dbReference>
<dbReference type="PANTHER" id="PTHR11550">
    <property type="entry name" value="CTP SYNTHASE"/>
    <property type="match status" value="1"/>
</dbReference>
<dbReference type="PANTHER" id="PTHR11550:SF0">
    <property type="entry name" value="CTP SYNTHASE-RELATED"/>
    <property type="match status" value="1"/>
</dbReference>
<dbReference type="Pfam" id="PF06418">
    <property type="entry name" value="CTP_synth_N"/>
    <property type="match status" value="1"/>
</dbReference>
<dbReference type="Pfam" id="PF00117">
    <property type="entry name" value="GATase"/>
    <property type="match status" value="1"/>
</dbReference>
<dbReference type="SUPFAM" id="SSF52317">
    <property type="entry name" value="Class I glutamine amidotransferase-like"/>
    <property type="match status" value="1"/>
</dbReference>
<dbReference type="SUPFAM" id="SSF52540">
    <property type="entry name" value="P-loop containing nucleoside triphosphate hydrolases"/>
    <property type="match status" value="1"/>
</dbReference>
<dbReference type="PROSITE" id="PS51273">
    <property type="entry name" value="GATASE_TYPE_1"/>
    <property type="match status" value="1"/>
</dbReference>
<name>PYRG_COXBU</name>
<evidence type="ECO:0000255" key="1">
    <source>
        <dbReference type="HAMAP-Rule" id="MF_01227"/>
    </source>
</evidence>
<gene>
    <name evidence="1" type="primary">pyrG</name>
    <name type="ordered locus">CBU_1682</name>
</gene>
<proteinExistence type="inferred from homology"/>
<protein>
    <recommendedName>
        <fullName evidence="1">CTP synthase</fullName>
        <ecNumber evidence="1">6.3.4.2</ecNumber>
    </recommendedName>
    <alternativeName>
        <fullName evidence="1">Cytidine 5'-triphosphate synthase</fullName>
    </alternativeName>
    <alternativeName>
        <fullName evidence="1">Cytidine triphosphate synthetase</fullName>
        <shortName evidence="1">CTP synthetase</shortName>
        <shortName evidence="1">CTPS</shortName>
    </alternativeName>
    <alternativeName>
        <fullName evidence="1">UTP--ammonia ligase</fullName>
    </alternativeName>
</protein>
<accession>Q83B36</accession>